<name>ATG20_KLULA</name>
<accession>Q6CNX6</accession>
<feature type="chain" id="PRO_0000213823" description="Autophagy-related protein 20">
    <location>
        <begin position="1"/>
        <end position="636"/>
    </location>
</feature>
<feature type="domain" description="PX" evidence="2">
    <location>
        <begin position="160"/>
        <end position="305"/>
    </location>
</feature>
<feature type="region of interest" description="Disordered" evidence="3">
    <location>
        <begin position="1"/>
        <end position="68"/>
    </location>
</feature>
<feature type="region of interest" description="Disordered" evidence="3">
    <location>
        <begin position="84"/>
        <end position="163"/>
    </location>
</feature>
<feature type="compositionally biased region" description="Polar residues" evidence="3">
    <location>
        <begin position="10"/>
        <end position="23"/>
    </location>
</feature>
<feature type="compositionally biased region" description="Basic and acidic residues" evidence="3">
    <location>
        <begin position="27"/>
        <end position="49"/>
    </location>
</feature>
<feature type="compositionally biased region" description="Polar residues" evidence="3">
    <location>
        <begin position="50"/>
        <end position="64"/>
    </location>
</feature>
<feature type="compositionally biased region" description="Basic residues" evidence="3">
    <location>
        <begin position="122"/>
        <end position="133"/>
    </location>
</feature>
<feature type="binding site" evidence="1">
    <location>
        <position position="196"/>
    </location>
    <ligand>
        <name>a 1,2-diacyl-sn-glycero-3-phospho-(1D-myo-inositol-3-phosphate)</name>
        <dbReference type="ChEBI" id="CHEBI:58088"/>
    </ligand>
</feature>
<feature type="binding site" evidence="1">
    <location>
        <position position="198"/>
    </location>
    <ligand>
        <name>a 1,2-diacyl-sn-glycero-3-phospho-(1D-myo-inositol-3-phosphate)</name>
        <dbReference type="ChEBI" id="CHEBI:58088"/>
    </ligand>
</feature>
<feature type="binding site" evidence="1">
    <location>
        <position position="222"/>
    </location>
    <ligand>
        <name>a 1,2-diacyl-sn-glycero-3-phospho-(1D-myo-inositol-3-phosphate)</name>
        <dbReference type="ChEBI" id="CHEBI:58088"/>
    </ligand>
</feature>
<feature type="binding site" evidence="1">
    <location>
        <position position="271"/>
    </location>
    <ligand>
        <name>a 1,2-diacyl-sn-glycero-3-phospho-(1D-myo-inositol-3-phosphate)</name>
        <dbReference type="ChEBI" id="CHEBI:58088"/>
    </ligand>
</feature>
<dbReference type="EMBL" id="CR382125">
    <property type="protein sequence ID" value="CAG99450.1"/>
    <property type="molecule type" value="Genomic_DNA"/>
</dbReference>
<dbReference type="RefSeq" id="XP_454363.1">
    <property type="nucleotide sequence ID" value="XM_454363.1"/>
</dbReference>
<dbReference type="SMR" id="Q6CNX6"/>
<dbReference type="FunCoup" id="Q6CNX6">
    <property type="interactions" value="165"/>
</dbReference>
<dbReference type="STRING" id="284590.Q6CNX6"/>
<dbReference type="PaxDb" id="284590-Q6CNX6"/>
<dbReference type="KEGG" id="kla:KLLA0_E09175g"/>
<dbReference type="eggNOG" id="KOG2273">
    <property type="taxonomic scope" value="Eukaryota"/>
</dbReference>
<dbReference type="HOGENOM" id="CLU_014456_2_1_1"/>
<dbReference type="InParanoid" id="Q6CNX6"/>
<dbReference type="OMA" id="ICNTDIT"/>
<dbReference type="Proteomes" id="UP000000598">
    <property type="component" value="Chromosome E"/>
</dbReference>
<dbReference type="GO" id="GO:0005829">
    <property type="term" value="C:cytosol"/>
    <property type="evidence" value="ECO:0007669"/>
    <property type="project" value="GOC"/>
</dbReference>
<dbReference type="GO" id="GO:0010008">
    <property type="term" value="C:endosome membrane"/>
    <property type="evidence" value="ECO:0007669"/>
    <property type="project" value="UniProtKB-SubCell"/>
</dbReference>
<dbReference type="GO" id="GO:0034045">
    <property type="term" value="C:phagophore assembly site membrane"/>
    <property type="evidence" value="ECO:0007669"/>
    <property type="project" value="UniProtKB-SubCell"/>
</dbReference>
<dbReference type="GO" id="GO:0032266">
    <property type="term" value="F:phosphatidylinositol-3-phosphate binding"/>
    <property type="evidence" value="ECO:0007669"/>
    <property type="project" value="UniProtKB-ARBA"/>
</dbReference>
<dbReference type="GO" id="GO:0006914">
    <property type="term" value="P:autophagy"/>
    <property type="evidence" value="ECO:0007669"/>
    <property type="project" value="UniProtKB-KW"/>
</dbReference>
<dbReference type="GO" id="GO:0015031">
    <property type="term" value="P:protein transport"/>
    <property type="evidence" value="ECO:0007669"/>
    <property type="project" value="UniProtKB-KW"/>
</dbReference>
<dbReference type="GO" id="GO:0042147">
    <property type="term" value="P:retrograde transport, endosome to Golgi"/>
    <property type="evidence" value="ECO:0007669"/>
    <property type="project" value="InterPro"/>
</dbReference>
<dbReference type="CDD" id="cd07629">
    <property type="entry name" value="BAR_Atg20p"/>
    <property type="match status" value="1"/>
</dbReference>
<dbReference type="CDD" id="cd06867">
    <property type="entry name" value="PX_SNX41_42"/>
    <property type="match status" value="1"/>
</dbReference>
<dbReference type="Gene3D" id="1.20.1270.60">
    <property type="entry name" value="Arfaptin homology (AH) domain/BAR domain"/>
    <property type="match status" value="1"/>
</dbReference>
<dbReference type="Gene3D" id="3.30.1520.10">
    <property type="entry name" value="Phox-like domain"/>
    <property type="match status" value="1"/>
</dbReference>
<dbReference type="InterPro" id="IPR027267">
    <property type="entry name" value="AH/BAR_dom_sf"/>
</dbReference>
<dbReference type="InterPro" id="IPR001683">
    <property type="entry name" value="PX_dom"/>
</dbReference>
<dbReference type="InterPro" id="IPR036871">
    <property type="entry name" value="PX_dom_sf"/>
</dbReference>
<dbReference type="InterPro" id="IPR044106">
    <property type="entry name" value="PX_Snx41/Atg20"/>
</dbReference>
<dbReference type="InterPro" id="IPR051079">
    <property type="entry name" value="Sorting_Nexin_Autophagy"/>
</dbReference>
<dbReference type="PANTHER" id="PTHR46979:SF1">
    <property type="entry name" value="AUTOPHAGY-RELATED PROTEIN 20"/>
    <property type="match status" value="1"/>
</dbReference>
<dbReference type="PANTHER" id="PTHR46979">
    <property type="entry name" value="SORTING NEXIN-41"/>
    <property type="match status" value="1"/>
</dbReference>
<dbReference type="Pfam" id="PF00787">
    <property type="entry name" value="PX"/>
    <property type="match status" value="1"/>
</dbReference>
<dbReference type="SMART" id="SM00312">
    <property type="entry name" value="PX"/>
    <property type="match status" value="1"/>
</dbReference>
<dbReference type="SUPFAM" id="SSF64268">
    <property type="entry name" value="PX domain"/>
    <property type="match status" value="1"/>
</dbReference>
<dbReference type="PROSITE" id="PS50195">
    <property type="entry name" value="PX"/>
    <property type="match status" value="1"/>
</dbReference>
<reference key="1">
    <citation type="journal article" date="2004" name="Nature">
        <title>Genome evolution in yeasts.</title>
        <authorList>
            <person name="Dujon B."/>
            <person name="Sherman D."/>
            <person name="Fischer G."/>
            <person name="Durrens P."/>
            <person name="Casaregola S."/>
            <person name="Lafontaine I."/>
            <person name="de Montigny J."/>
            <person name="Marck C."/>
            <person name="Neuveglise C."/>
            <person name="Talla E."/>
            <person name="Goffard N."/>
            <person name="Frangeul L."/>
            <person name="Aigle M."/>
            <person name="Anthouard V."/>
            <person name="Babour A."/>
            <person name="Barbe V."/>
            <person name="Barnay S."/>
            <person name="Blanchin S."/>
            <person name="Beckerich J.-M."/>
            <person name="Beyne E."/>
            <person name="Bleykasten C."/>
            <person name="Boisrame A."/>
            <person name="Boyer J."/>
            <person name="Cattolico L."/>
            <person name="Confanioleri F."/>
            <person name="de Daruvar A."/>
            <person name="Despons L."/>
            <person name="Fabre E."/>
            <person name="Fairhead C."/>
            <person name="Ferry-Dumazet H."/>
            <person name="Groppi A."/>
            <person name="Hantraye F."/>
            <person name="Hennequin C."/>
            <person name="Jauniaux N."/>
            <person name="Joyet P."/>
            <person name="Kachouri R."/>
            <person name="Kerrest A."/>
            <person name="Koszul R."/>
            <person name="Lemaire M."/>
            <person name="Lesur I."/>
            <person name="Ma L."/>
            <person name="Muller H."/>
            <person name="Nicaud J.-M."/>
            <person name="Nikolski M."/>
            <person name="Oztas S."/>
            <person name="Ozier-Kalogeropoulos O."/>
            <person name="Pellenz S."/>
            <person name="Potier S."/>
            <person name="Richard G.-F."/>
            <person name="Straub M.-L."/>
            <person name="Suleau A."/>
            <person name="Swennen D."/>
            <person name="Tekaia F."/>
            <person name="Wesolowski-Louvel M."/>
            <person name="Westhof E."/>
            <person name="Wirth B."/>
            <person name="Zeniou-Meyer M."/>
            <person name="Zivanovic Y."/>
            <person name="Bolotin-Fukuhara M."/>
            <person name="Thierry A."/>
            <person name="Bouchier C."/>
            <person name="Caudron B."/>
            <person name="Scarpelli C."/>
            <person name="Gaillardin C."/>
            <person name="Weissenbach J."/>
            <person name="Wincker P."/>
            <person name="Souciet J.-L."/>
        </authorList>
    </citation>
    <scope>NUCLEOTIDE SEQUENCE [LARGE SCALE GENOMIC DNA]</scope>
    <source>
        <strain>ATCC 8585 / CBS 2359 / DSM 70799 / NBRC 1267 / NRRL Y-1140 / WM37</strain>
    </source>
</reference>
<comment type="function">
    <text evidence="1">Required for cytoplasm to vacuole transport (Cvt), pexophagy and mitophagy. Also involved in endoplasmic reticulum-specific autophagic process and is essential for the survival of cells subjected to severe ER stress. Functions in protein retrieval from the endocytic pathway (By similarity).</text>
</comment>
<comment type="subcellular location">
    <subcellularLocation>
        <location evidence="1">Endosome membrane</location>
        <topology evidence="1">Peripheral membrane protein</topology>
    </subcellularLocation>
    <subcellularLocation>
        <location evidence="1">Preautophagosomal structure membrane</location>
        <topology evidence="1">Peripheral membrane protein</topology>
    </subcellularLocation>
</comment>
<comment type="domain">
    <text evidence="1">The PX domain binds phosphatidylinositol 3-phosphate which is necessary for peripheral membrane localization to the perivacuolar punctate structures.</text>
</comment>
<comment type="similarity">
    <text evidence="4">Belongs to the sorting nexin family.</text>
</comment>
<organism>
    <name type="scientific">Kluyveromyces lactis (strain ATCC 8585 / CBS 2359 / DSM 70799 / NBRC 1267 / NRRL Y-1140 / WM37)</name>
    <name type="common">Yeast</name>
    <name type="synonym">Candida sphaerica</name>
    <dbReference type="NCBI Taxonomy" id="284590"/>
    <lineage>
        <taxon>Eukaryota</taxon>
        <taxon>Fungi</taxon>
        <taxon>Dikarya</taxon>
        <taxon>Ascomycota</taxon>
        <taxon>Saccharomycotina</taxon>
        <taxon>Saccharomycetes</taxon>
        <taxon>Saccharomycetales</taxon>
        <taxon>Saccharomycetaceae</taxon>
        <taxon>Kluyveromyces</taxon>
    </lineage>
</organism>
<evidence type="ECO:0000250" key="1"/>
<evidence type="ECO:0000255" key="2">
    <source>
        <dbReference type="PROSITE-ProRule" id="PRU00147"/>
    </source>
</evidence>
<evidence type="ECO:0000256" key="3">
    <source>
        <dbReference type="SAM" id="MobiDB-lite"/>
    </source>
</evidence>
<evidence type="ECO:0000305" key="4"/>
<sequence>MQINFEPMPNSVTHLENNSPSRLKNNKTVEEHKEHEPDLQTQSEMRRESNGSPKDTAVTNQNGDQPHENVIHTQIIKKDNPFFNYMQDNVDGSDENGKNDDDDENAKNAGSDDNEDQLLQPNRRKNSKERRRSSVATSKDSSPDVPYNTLNHNASGMTKEGKKRAQILEASKVSEGQGRTYIAYAIKYGDSIVKRRYSDFESLRKVLVKLFPISLIPPIPEKQSLKSYGKAMTYSKSSYLLPTESGDSVDLSLSVINGPVTTNDEKLIRHRIRMLTSFLNRLLKNQEITKTSIVYDFLDPNNKNWNDLITSSLTISSLPKSVLQCNPIDPTNTTKAHSYLPVPSSSTQLLASKDNHSASDADEFTKIEAEFKNYEQLIHSGLYKYSRATTKEVNYLREDLKGISSEFAQLSTDETKNESGLAELLSHSSDAYGTLQEILETLVGNLHYNINEPLSECAHMATAVRDLIHYRRLKLIQKDILERTILYKRGQLIKFQQQENDHKQIDNMVKEELGTNGAVNLENPAGPQSYSGKFINKFTQLAIIIKDSVSYQEQDPAAAARSLEKELIQLDETLKVATSDLVVISETLKNTELPNFIKERDEELTQIFKNYAKYMKENATRNLEIWKELHNRIQEA</sequence>
<keyword id="KW-0072">Autophagy</keyword>
<keyword id="KW-0967">Endosome</keyword>
<keyword id="KW-0446">Lipid-binding</keyword>
<keyword id="KW-0472">Membrane</keyword>
<keyword id="KW-0653">Protein transport</keyword>
<keyword id="KW-1185">Reference proteome</keyword>
<keyword id="KW-0813">Transport</keyword>
<protein>
    <recommendedName>
        <fullName>Autophagy-related protein 20</fullName>
    </recommendedName>
</protein>
<proteinExistence type="inferred from homology"/>
<gene>
    <name type="primary">ATG20</name>
    <name type="ordered locus">KLLA0E09141g</name>
</gene>